<organism>
    <name type="scientific">Oedogonium cardiacum</name>
    <name type="common">Filamentous green alga</name>
    <dbReference type="NCBI Taxonomy" id="55995"/>
    <lineage>
        <taxon>Eukaryota</taxon>
        <taxon>Viridiplantae</taxon>
        <taxon>Chlorophyta</taxon>
        <taxon>core chlorophytes</taxon>
        <taxon>Chlorophyceae</taxon>
        <taxon>OCC clade</taxon>
        <taxon>Oedogoniales</taxon>
        <taxon>Oedogoniaceae</taxon>
        <taxon>Oedogonium</taxon>
    </lineage>
</organism>
<sequence>MKDFTTYLSTAPVVAFAWITITAGLLIEINRFFPDPLVFSF</sequence>
<evidence type="ECO:0000255" key="1">
    <source>
        <dbReference type="HAMAP-Rule" id="MF_00522"/>
    </source>
</evidence>
<comment type="function">
    <text evidence="1">May help in the organization of the PsaE and PsaF subunits.</text>
</comment>
<comment type="subcellular location">
    <subcellularLocation>
        <location evidence="1">Plastid</location>
        <location evidence="1">Chloroplast thylakoid membrane</location>
        <topology evidence="1">Single-pass membrane protein</topology>
    </subcellularLocation>
</comment>
<comment type="similarity">
    <text evidence="1">Belongs to the PsaJ family.</text>
</comment>
<dbReference type="EMBL" id="EF587339">
    <property type="protein sequence ID" value="ABU88177.1"/>
    <property type="molecule type" value="Genomic_DNA"/>
</dbReference>
<dbReference type="EMBL" id="EU677193">
    <property type="protein sequence ID" value="ACC97224.1"/>
    <property type="molecule type" value="Genomic_DNA"/>
</dbReference>
<dbReference type="RefSeq" id="YP_002000401.1">
    <property type="nucleotide sequence ID" value="NC_011031.1"/>
</dbReference>
<dbReference type="SMR" id="B2X1W4"/>
<dbReference type="GeneID" id="6440141"/>
<dbReference type="GO" id="GO:0009535">
    <property type="term" value="C:chloroplast thylakoid membrane"/>
    <property type="evidence" value="ECO:0007669"/>
    <property type="project" value="UniProtKB-SubCell"/>
</dbReference>
<dbReference type="GO" id="GO:0009522">
    <property type="term" value="C:photosystem I"/>
    <property type="evidence" value="ECO:0007669"/>
    <property type="project" value="UniProtKB-KW"/>
</dbReference>
<dbReference type="GO" id="GO:0015979">
    <property type="term" value="P:photosynthesis"/>
    <property type="evidence" value="ECO:0007669"/>
    <property type="project" value="UniProtKB-UniRule"/>
</dbReference>
<dbReference type="Gene3D" id="1.20.5.510">
    <property type="entry name" value="Single helix bin"/>
    <property type="match status" value="1"/>
</dbReference>
<dbReference type="HAMAP" id="MF_00522">
    <property type="entry name" value="PSI_PsaJ"/>
    <property type="match status" value="1"/>
</dbReference>
<dbReference type="InterPro" id="IPR002615">
    <property type="entry name" value="PSI_PsaJ"/>
</dbReference>
<dbReference type="InterPro" id="IPR036062">
    <property type="entry name" value="PSI_PsaJ_sf"/>
</dbReference>
<dbReference type="PANTHER" id="PTHR36082">
    <property type="match status" value="1"/>
</dbReference>
<dbReference type="PANTHER" id="PTHR36082:SF2">
    <property type="entry name" value="PHOTOSYSTEM I REACTION CENTER SUBUNIT IX"/>
    <property type="match status" value="1"/>
</dbReference>
<dbReference type="Pfam" id="PF01701">
    <property type="entry name" value="PSI_PsaJ"/>
    <property type="match status" value="1"/>
</dbReference>
<dbReference type="SUPFAM" id="SSF81544">
    <property type="entry name" value="Subunit IX of photosystem I reaction centre, PsaJ"/>
    <property type="match status" value="1"/>
</dbReference>
<reference key="1">
    <citation type="journal article" date="2008" name="J. Phycol.">
        <title>Deep division in the Chlorophyceae (Chlorophyta) revealed by chloroplast phylogenomic analyseS.</title>
        <authorList>
            <person name="Turmel M."/>
            <person name="Brouard J.-S."/>
            <person name="Gagnon C."/>
            <person name="Otis C."/>
            <person name="Lemieux C."/>
        </authorList>
        <dbReference type="AGRICOLA" id="IND44059346"/>
    </citation>
    <scope>NUCLEOTIDE SEQUENCE [GENOMIC DNA]</scope>
    <source>
        <strain>SAG 575-1b / CCAP 575/1B / UTEX LB 40</strain>
    </source>
</reference>
<reference key="2">
    <citation type="journal article" date="2008" name="BMC Genomics">
        <title>Chloroplast DNA sequence of the green alga Oedogonium cardiacum (Chlorophyceae): unique genome architecture, derived characters shared with the Chaetophorales and novel genes acquired through horizontal transfer.</title>
        <authorList>
            <person name="Brouard J.-S."/>
            <person name="Otis C."/>
            <person name="Lemieux C."/>
            <person name="Turmel M."/>
        </authorList>
    </citation>
    <scope>NUCLEOTIDE SEQUENCE [LARGE SCALE GENOMIC DNA]</scope>
    <source>
        <strain>SAG 575-1b / CCAP 575/1B / UTEX LB 40</strain>
    </source>
</reference>
<feature type="chain" id="PRO_0000354161" description="Photosystem I reaction center subunit IX">
    <location>
        <begin position="1"/>
        <end position="41"/>
    </location>
</feature>
<feature type="transmembrane region" description="Helical" evidence="1">
    <location>
        <begin position="7"/>
        <end position="27"/>
    </location>
</feature>
<accession>B2X1W4</accession>
<gene>
    <name evidence="1" type="primary">psaJ</name>
</gene>
<protein>
    <recommendedName>
        <fullName evidence="1">Photosystem I reaction center subunit IX</fullName>
    </recommendedName>
    <alternativeName>
        <fullName evidence="1">PSI-J</fullName>
    </alternativeName>
</protein>
<geneLocation type="chloroplast"/>
<proteinExistence type="inferred from homology"/>
<keyword id="KW-0150">Chloroplast</keyword>
<keyword id="KW-0472">Membrane</keyword>
<keyword id="KW-0602">Photosynthesis</keyword>
<keyword id="KW-0603">Photosystem I</keyword>
<keyword id="KW-0934">Plastid</keyword>
<keyword id="KW-0793">Thylakoid</keyword>
<keyword id="KW-0812">Transmembrane</keyword>
<keyword id="KW-1133">Transmembrane helix</keyword>
<name>PSAJ_OEDCA</name>